<sequence length="155" mass="17046">MDQAKLARMQQSVRIGGKGTPRRKVKKVHKSSGADDKKLQATLKKMNVQPIQAIEEVNMFKEDGNVIHFGAPKVHASVPSNTFALYGNGEEKELTELVPGILNQLGPDSLASLRKLAESYQNMQKNQAGADGKKDDEEDDIPDLVEGENFESNVE</sequence>
<dbReference type="EMBL" id="AM270282">
    <property type="protein sequence ID" value="CAK41229.1"/>
    <property type="molecule type" value="Genomic_DNA"/>
</dbReference>
<dbReference type="SMR" id="A2R091"/>
<dbReference type="EnsemblFungi" id="CAK41229">
    <property type="protein sequence ID" value="CAK41229"/>
    <property type="gene ID" value="An12g07790"/>
</dbReference>
<dbReference type="VEuPathDB" id="FungiDB:An12g07790"/>
<dbReference type="HOGENOM" id="CLU_098726_2_0_1"/>
<dbReference type="Proteomes" id="UP000006706">
    <property type="component" value="Chromosome 3L"/>
</dbReference>
<dbReference type="GO" id="GO:0005854">
    <property type="term" value="C:nascent polypeptide-associated complex"/>
    <property type="evidence" value="ECO:0007669"/>
    <property type="project" value="EnsemblFungi"/>
</dbReference>
<dbReference type="GO" id="GO:0005634">
    <property type="term" value="C:nucleus"/>
    <property type="evidence" value="ECO:0007669"/>
    <property type="project" value="UniProtKB-SubCell"/>
</dbReference>
<dbReference type="GO" id="GO:0015031">
    <property type="term" value="P:protein transport"/>
    <property type="evidence" value="ECO:0007669"/>
    <property type="project" value="UniProtKB-KW"/>
</dbReference>
<dbReference type="CDD" id="cd22055">
    <property type="entry name" value="NAC_BTF3"/>
    <property type="match status" value="1"/>
</dbReference>
<dbReference type="FunFam" id="2.20.70.30:FF:000003">
    <property type="entry name" value="Nascent polypeptide-associated complex subunit beta"/>
    <property type="match status" value="1"/>
</dbReference>
<dbReference type="Gene3D" id="2.20.70.30">
    <property type="entry name" value="Nascent polypeptide-associated complex domain"/>
    <property type="match status" value="1"/>
</dbReference>
<dbReference type="InterPro" id="IPR039370">
    <property type="entry name" value="BTF3"/>
</dbReference>
<dbReference type="InterPro" id="IPR038187">
    <property type="entry name" value="NAC_A/B_dom_sf"/>
</dbReference>
<dbReference type="InterPro" id="IPR002715">
    <property type="entry name" value="Nas_poly-pep-assoc_cplx_dom"/>
</dbReference>
<dbReference type="PANTHER" id="PTHR10351">
    <property type="entry name" value="TRANSCRIPTION FACTOR BTF3 FAMILY MEMBER"/>
    <property type="match status" value="1"/>
</dbReference>
<dbReference type="Pfam" id="PF01849">
    <property type="entry name" value="NAC"/>
    <property type="match status" value="1"/>
</dbReference>
<dbReference type="SMART" id="SM01407">
    <property type="entry name" value="NAC"/>
    <property type="match status" value="1"/>
</dbReference>
<dbReference type="PROSITE" id="PS51151">
    <property type="entry name" value="NAC_AB"/>
    <property type="match status" value="1"/>
</dbReference>
<evidence type="ECO:0000250" key="1"/>
<evidence type="ECO:0000255" key="2">
    <source>
        <dbReference type="PROSITE-ProRule" id="PRU00507"/>
    </source>
</evidence>
<evidence type="ECO:0000256" key="3">
    <source>
        <dbReference type="SAM" id="MobiDB-lite"/>
    </source>
</evidence>
<evidence type="ECO:0000305" key="4"/>
<feature type="chain" id="PRO_0000282684" description="Nascent polypeptide-associated complex subunit beta">
    <location>
        <begin position="1"/>
        <end position="155"/>
    </location>
</feature>
<feature type="domain" description="NAC-A/B" evidence="2">
    <location>
        <begin position="33"/>
        <end position="98"/>
    </location>
</feature>
<feature type="region of interest" description="Disordered" evidence="3">
    <location>
        <begin position="1"/>
        <end position="35"/>
    </location>
</feature>
<feature type="region of interest" description="Disordered" evidence="3">
    <location>
        <begin position="116"/>
        <end position="155"/>
    </location>
</feature>
<feature type="compositionally biased region" description="Basic residues" evidence="3">
    <location>
        <begin position="20"/>
        <end position="30"/>
    </location>
</feature>
<feature type="compositionally biased region" description="Acidic residues" evidence="3">
    <location>
        <begin position="136"/>
        <end position="155"/>
    </location>
</feature>
<protein>
    <recommendedName>
        <fullName>Nascent polypeptide-associated complex subunit beta</fullName>
        <shortName>NAC-beta</shortName>
    </recommendedName>
    <alternativeName>
        <fullName>Beta-NAC</fullName>
    </alternativeName>
</protein>
<reference key="1">
    <citation type="journal article" date="2007" name="Nat. Biotechnol.">
        <title>Genome sequencing and analysis of the versatile cell factory Aspergillus niger CBS 513.88.</title>
        <authorList>
            <person name="Pel H.J."/>
            <person name="de Winde J.H."/>
            <person name="Archer D.B."/>
            <person name="Dyer P.S."/>
            <person name="Hofmann G."/>
            <person name="Schaap P.J."/>
            <person name="Turner G."/>
            <person name="de Vries R.P."/>
            <person name="Albang R."/>
            <person name="Albermann K."/>
            <person name="Andersen M.R."/>
            <person name="Bendtsen J.D."/>
            <person name="Benen J.A.E."/>
            <person name="van den Berg M."/>
            <person name="Breestraat S."/>
            <person name="Caddick M.X."/>
            <person name="Contreras R."/>
            <person name="Cornell M."/>
            <person name="Coutinho P.M."/>
            <person name="Danchin E.G.J."/>
            <person name="Debets A.J.M."/>
            <person name="Dekker P."/>
            <person name="van Dijck P.W.M."/>
            <person name="van Dijk A."/>
            <person name="Dijkhuizen L."/>
            <person name="Driessen A.J.M."/>
            <person name="d'Enfert C."/>
            <person name="Geysens S."/>
            <person name="Goosen C."/>
            <person name="Groot G.S.P."/>
            <person name="de Groot P.W.J."/>
            <person name="Guillemette T."/>
            <person name="Henrissat B."/>
            <person name="Herweijer M."/>
            <person name="van den Hombergh J.P.T.W."/>
            <person name="van den Hondel C.A.M.J.J."/>
            <person name="van der Heijden R.T.J.M."/>
            <person name="van der Kaaij R.M."/>
            <person name="Klis F.M."/>
            <person name="Kools H.J."/>
            <person name="Kubicek C.P."/>
            <person name="van Kuyk P.A."/>
            <person name="Lauber J."/>
            <person name="Lu X."/>
            <person name="van der Maarel M.J.E.C."/>
            <person name="Meulenberg R."/>
            <person name="Menke H."/>
            <person name="Mortimer M.A."/>
            <person name="Nielsen J."/>
            <person name="Oliver S.G."/>
            <person name="Olsthoorn M."/>
            <person name="Pal K."/>
            <person name="van Peij N.N.M.E."/>
            <person name="Ram A.F.J."/>
            <person name="Rinas U."/>
            <person name="Roubos J.A."/>
            <person name="Sagt C.M.J."/>
            <person name="Schmoll M."/>
            <person name="Sun J."/>
            <person name="Ussery D."/>
            <person name="Varga J."/>
            <person name="Vervecken W."/>
            <person name="van de Vondervoort P.J.J."/>
            <person name="Wedler H."/>
            <person name="Woesten H.A.B."/>
            <person name="Zeng A.-P."/>
            <person name="van Ooyen A.J.J."/>
            <person name="Visser J."/>
            <person name="Stam H."/>
        </authorList>
    </citation>
    <scope>NUCLEOTIDE SEQUENCE [LARGE SCALE GENOMIC DNA]</scope>
    <source>
        <strain>ATCC MYA-4892 / CBS 513.88 / FGSC A1513</strain>
    </source>
</reference>
<keyword id="KW-0963">Cytoplasm</keyword>
<keyword id="KW-0539">Nucleus</keyword>
<keyword id="KW-0653">Protein transport</keyword>
<keyword id="KW-1185">Reference proteome</keyword>
<keyword id="KW-0678">Repressor</keyword>
<keyword id="KW-0804">Transcription</keyword>
<keyword id="KW-0805">Transcription regulation</keyword>
<keyword id="KW-0813">Transport</keyword>
<name>NACB_ASPNC</name>
<gene>
    <name type="primary">egd1</name>
    <name type="ORF">An12g07790</name>
</gene>
<organism>
    <name type="scientific">Aspergillus niger (strain ATCC MYA-4892 / CBS 513.88 / FGSC A1513)</name>
    <dbReference type="NCBI Taxonomy" id="425011"/>
    <lineage>
        <taxon>Eukaryota</taxon>
        <taxon>Fungi</taxon>
        <taxon>Dikarya</taxon>
        <taxon>Ascomycota</taxon>
        <taxon>Pezizomycotina</taxon>
        <taxon>Eurotiomycetes</taxon>
        <taxon>Eurotiomycetidae</taxon>
        <taxon>Eurotiales</taxon>
        <taxon>Aspergillaceae</taxon>
        <taxon>Aspergillus</taxon>
        <taxon>Aspergillus subgen. Circumdati</taxon>
    </lineage>
</organism>
<accession>A2R091</accession>
<comment type="function">
    <text evidence="1">Component of the nascent polypeptide-associated complex (NAC), a dynamic component of the ribosomal exit tunnel, protecting the emerging polypeptides from interaction with other cytoplasmic proteins to ensure appropriate nascent protein targeting. The NAC complex also promotes mitochondrial protein import by enhancing productive ribosome interactions with the outer mitochondrial membrane and blocks the inappropriate interaction of ribosomes translating non-secretory nascent polypeptides with translocation sites in the membrane of the endoplasmic reticulum. EGD1 may act as a transcription factor that exert a negative effect on the expression of several genes that are transcribed by RNA polymerase II.</text>
</comment>
<comment type="subunit">
    <text evidence="1">Part of the nascent polypeptide-associated complex (NAC), consisting of egd2 and egd1. NAC associates with ribosomes via egd1 (By similarity).</text>
</comment>
<comment type="subcellular location">
    <subcellularLocation>
        <location evidence="1">Cytoplasm</location>
    </subcellularLocation>
    <subcellularLocation>
        <location evidence="1">Nucleus</location>
    </subcellularLocation>
    <text evidence="1">Predominantly cytoplasmic, may also transiently localize to the nucleus.</text>
</comment>
<comment type="similarity">
    <text evidence="4">Belongs to the NAC-beta family.</text>
</comment>
<proteinExistence type="inferred from homology"/>